<evidence type="ECO:0000250" key="1">
    <source>
        <dbReference type="UniProtKB" id="Q2G2U6"/>
    </source>
</evidence>
<evidence type="ECO:0000250" key="2">
    <source>
        <dbReference type="UniProtKB" id="Q7A8E1"/>
    </source>
</evidence>
<evidence type="ECO:0000250" key="3">
    <source>
        <dbReference type="UniProtKB" id="Q9RDT5"/>
    </source>
</evidence>
<evidence type="ECO:0000255" key="4">
    <source>
        <dbReference type="PROSITE-ProRule" id="PRU00169"/>
    </source>
</evidence>
<evidence type="ECO:0000255" key="5">
    <source>
        <dbReference type="PROSITE-ProRule" id="PRU01091"/>
    </source>
</evidence>
<evidence type="ECO:0000305" key="6"/>
<reference key="1">
    <citation type="journal article" date="2001" name="Lancet">
        <title>Whole genome sequencing of meticillin-resistant Staphylococcus aureus.</title>
        <authorList>
            <person name="Kuroda M."/>
            <person name="Ohta T."/>
            <person name="Uchiyama I."/>
            <person name="Baba T."/>
            <person name="Yuzawa H."/>
            <person name="Kobayashi I."/>
            <person name="Cui L."/>
            <person name="Oguchi A."/>
            <person name="Aoki K."/>
            <person name="Nagai Y."/>
            <person name="Lian J.-Q."/>
            <person name="Ito T."/>
            <person name="Kanamori M."/>
            <person name="Matsumaru H."/>
            <person name="Maruyama A."/>
            <person name="Murakami H."/>
            <person name="Hosoyama A."/>
            <person name="Mizutani-Ui Y."/>
            <person name="Takahashi N.K."/>
            <person name="Sawano T."/>
            <person name="Inoue R."/>
            <person name="Kaito C."/>
            <person name="Sekimizu K."/>
            <person name="Hirakawa H."/>
            <person name="Kuhara S."/>
            <person name="Goto S."/>
            <person name="Yabuzaki J."/>
            <person name="Kanehisa M."/>
            <person name="Yamashita A."/>
            <person name="Oshima K."/>
            <person name="Furuya K."/>
            <person name="Yoshino C."/>
            <person name="Shiba T."/>
            <person name="Hattori M."/>
            <person name="Ogasawara N."/>
            <person name="Hayashi H."/>
            <person name="Hiramatsu K."/>
        </authorList>
    </citation>
    <scope>NUCLEOTIDE SEQUENCE [LARGE SCALE GENOMIC DNA]</scope>
    <source>
        <strain>Mu50 / ATCC 700699</strain>
    </source>
</reference>
<keyword id="KW-0010">Activator</keyword>
<keyword id="KW-0963">Cytoplasm</keyword>
<keyword id="KW-0238">DNA-binding</keyword>
<keyword id="KW-0597">Phosphoprotein</keyword>
<keyword id="KW-0804">Transcription</keyword>
<keyword id="KW-0805">Transcription regulation</keyword>
<keyword id="KW-0902">Two-component regulatory system</keyword>
<proteinExistence type="inferred from homology"/>
<accession>Q99XF3</accession>
<name>WALR_STAAM</name>
<dbReference type="EMBL" id="BA000017">
    <property type="protein sequence ID" value="BAB56180.1"/>
    <property type="status" value="ALT_INIT"/>
    <property type="molecule type" value="Genomic_DNA"/>
</dbReference>
<dbReference type="SMR" id="Q99XF3"/>
<dbReference type="KEGG" id="sav:SAV0018"/>
<dbReference type="HOGENOM" id="CLU_000445_30_4_9"/>
<dbReference type="Proteomes" id="UP000002481">
    <property type="component" value="Chromosome"/>
</dbReference>
<dbReference type="GO" id="GO:0005829">
    <property type="term" value="C:cytosol"/>
    <property type="evidence" value="ECO:0007669"/>
    <property type="project" value="TreeGrafter"/>
</dbReference>
<dbReference type="GO" id="GO:0032993">
    <property type="term" value="C:protein-DNA complex"/>
    <property type="evidence" value="ECO:0007669"/>
    <property type="project" value="TreeGrafter"/>
</dbReference>
<dbReference type="GO" id="GO:0000156">
    <property type="term" value="F:phosphorelay response regulator activity"/>
    <property type="evidence" value="ECO:0007669"/>
    <property type="project" value="TreeGrafter"/>
</dbReference>
<dbReference type="GO" id="GO:0000976">
    <property type="term" value="F:transcription cis-regulatory region binding"/>
    <property type="evidence" value="ECO:0007669"/>
    <property type="project" value="TreeGrafter"/>
</dbReference>
<dbReference type="GO" id="GO:0006355">
    <property type="term" value="P:regulation of DNA-templated transcription"/>
    <property type="evidence" value="ECO:0007669"/>
    <property type="project" value="InterPro"/>
</dbReference>
<dbReference type="CDD" id="cd17614">
    <property type="entry name" value="REC_OmpR_YycF-like"/>
    <property type="match status" value="1"/>
</dbReference>
<dbReference type="CDD" id="cd00383">
    <property type="entry name" value="trans_reg_C"/>
    <property type="match status" value="1"/>
</dbReference>
<dbReference type="FunFam" id="1.10.10.10:FF:000089">
    <property type="entry name" value="Alkaline phosphatase synthesis response regulator"/>
    <property type="match status" value="1"/>
</dbReference>
<dbReference type="FunFam" id="3.40.50.2300:FF:000052">
    <property type="entry name" value="DNA-binding response regulator YycF"/>
    <property type="match status" value="1"/>
</dbReference>
<dbReference type="Gene3D" id="3.40.50.2300">
    <property type="match status" value="1"/>
</dbReference>
<dbReference type="Gene3D" id="6.10.250.690">
    <property type="match status" value="1"/>
</dbReference>
<dbReference type="Gene3D" id="1.10.10.10">
    <property type="entry name" value="Winged helix-like DNA-binding domain superfamily/Winged helix DNA-binding domain"/>
    <property type="match status" value="1"/>
</dbReference>
<dbReference type="InterPro" id="IPR011006">
    <property type="entry name" value="CheY-like_superfamily"/>
</dbReference>
<dbReference type="InterPro" id="IPR001867">
    <property type="entry name" value="OmpR/PhoB-type_DNA-bd"/>
</dbReference>
<dbReference type="InterPro" id="IPR047791">
    <property type="entry name" value="Resp_reg_WalR"/>
</dbReference>
<dbReference type="InterPro" id="IPR016032">
    <property type="entry name" value="Sig_transdc_resp-reg_C-effctor"/>
</dbReference>
<dbReference type="InterPro" id="IPR001789">
    <property type="entry name" value="Sig_transdc_resp-reg_receiver"/>
</dbReference>
<dbReference type="InterPro" id="IPR039420">
    <property type="entry name" value="WalR-like"/>
</dbReference>
<dbReference type="InterPro" id="IPR036388">
    <property type="entry name" value="WH-like_DNA-bd_sf"/>
</dbReference>
<dbReference type="NCBIfam" id="NF040534">
    <property type="entry name" value="resp_reg_YycF"/>
    <property type="match status" value="1"/>
</dbReference>
<dbReference type="PANTHER" id="PTHR48111:SF40">
    <property type="entry name" value="PHOSPHATE REGULON TRANSCRIPTIONAL REGULATORY PROTEIN PHOB"/>
    <property type="match status" value="1"/>
</dbReference>
<dbReference type="PANTHER" id="PTHR48111">
    <property type="entry name" value="REGULATOR OF RPOS"/>
    <property type="match status" value="1"/>
</dbReference>
<dbReference type="Pfam" id="PF00072">
    <property type="entry name" value="Response_reg"/>
    <property type="match status" value="1"/>
</dbReference>
<dbReference type="Pfam" id="PF00486">
    <property type="entry name" value="Trans_reg_C"/>
    <property type="match status" value="1"/>
</dbReference>
<dbReference type="SMART" id="SM00448">
    <property type="entry name" value="REC"/>
    <property type="match status" value="1"/>
</dbReference>
<dbReference type="SMART" id="SM00862">
    <property type="entry name" value="Trans_reg_C"/>
    <property type="match status" value="1"/>
</dbReference>
<dbReference type="SUPFAM" id="SSF46894">
    <property type="entry name" value="C-terminal effector domain of the bipartite response regulators"/>
    <property type="match status" value="1"/>
</dbReference>
<dbReference type="SUPFAM" id="SSF52172">
    <property type="entry name" value="CheY-like"/>
    <property type="match status" value="1"/>
</dbReference>
<dbReference type="PROSITE" id="PS51755">
    <property type="entry name" value="OMPR_PHOB"/>
    <property type="match status" value="1"/>
</dbReference>
<dbReference type="PROSITE" id="PS50110">
    <property type="entry name" value="RESPONSE_REGULATORY"/>
    <property type="match status" value="1"/>
</dbReference>
<protein>
    <recommendedName>
        <fullName evidence="6">Transcriptional regulatory protein WalR</fullName>
    </recommendedName>
</protein>
<sequence length="233" mass="27192">MARKVVVVDDEKPIADILEFNLKKEGYDVYCAYDGNDAVDLIYEEEPDIVLLDIMLPGRDGMEVCREVRKKYEMPIIMLTAKDSEIDKVLGLELGADDYVTKPFSTRELIARVKANLRRHYSQPAQDTGNVTNEITIKDIVIYPDAYSIKKRGEDIELTHREFELFHYLSKHMGQVMTREHLLQTVWGYDYFGDVRTVDVTIRRLREKIEDDPSHPEYIVTRRGVGYFLQQHE</sequence>
<feature type="chain" id="PRO_0000353039" description="Transcriptional regulatory protein WalR">
    <location>
        <begin position="1"/>
        <end position="233"/>
    </location>
</feature>
<feature type="domain" description="Response regulatory" evidence="4">
    <location>
        <begin position="4"/>
        <end position="117"/>
    </location>
</feature>
<feature type="DNA-binding region" description="OmpR/PhoB-type" evidence="5">
    <location>
        <begin position="132"/>
        <end position="231"/>
    </location>
</feature>
<feature type="modified residue" description="4-aspartylphosphate" evidence="4">
    <location>
        <position position="53"/>
    </location>
</feature>
<feature type="modified residue" description="Phosphothreonine" evidence="2">
    <location>
        <position position="101"/>
    </location>
</feature>
<organism>
    <name type="scientific">Staphylococcus aureus (strain Mu50 / ATCC 700699)</name>
    <dbReference type="NCBI Taxonomy" id="158878"/>
    <lineage>
        <taxon>Bacteria</taxon>
        <taxon>Bacillati</taxon>
        <taxon>Bacillota</taxon>
        <taxon>Bacilli</taxon>
        <taxon>Bacillales</taxon>
        <taxon>Staphylococcaceae</taxon>
        <taxon>Staphylococcus</taxon>
    </lineage>
</organism>
<gene>
    <name type="primary">walR</name>
    <name type="synonym">vicR</name>
    <name type="ordered locus">SAV0018</name>
</gene>
<comment type="function">
    <text evidence="1 3">Member of the two-component regulatory system WalK/WalR that regulates genes involved in cell wall metabolism, virulence regulation, biofilm production, oxidative stress resistance and antibiotic resistance via direct or indirect regulation of autolysins (By similarity). Functions as a transcription regulator by direct binding to promoter regions (By similarity).</text>
</comment>
<comment type="subcellular location">
    <subcellularLocation>
        <location evidence="6">Cytoplasm</location>
    </subcellularLocation>
</comment>
<comment type="PTM">
    <text evidence="2 3">Phosphorylated by WalK on Asp-53 (By similarity). Phosphorylated by PknB on Thr-101 (By similarity).</text>
</comment>
<comment type="sequence caution" evidence="6">
    <conflict type="erroneous initiation">
        <sequence resource="EMBL-CDS" id="BAB56180"/>
    </conflict>
</comment>